<evidence type="ECO:0000255" key="1">
    <source>
        <dbReference type="HAMAP-Rule" id="MF_01390"/>
    </source>
</evidence>
<accession>Q8MEW7</accession>
<reference key="1">
    <citation type="submission" date="2000-08" db="EMBL/GenBank/DDBJ databases">
        <title>A re-evaluation of phylogeny in Pinaceae inferred from two genomes.</title>
        <authorList>
            <person name="Chaw S.-M."/>
        </authorList>
    </citation>
    <scope>NUCLEOTIDE SEQUENCE [GENOMIC DNA]</scope>
</reference>
<feature type="chain" id="PRO_0000143317" description="Maturase K">
    <location>
        <begin position="1"/>
        <end position="515"/>
    </location>
</feature>
<dbReference type="EMBL" id="AF295025">
    <property type="protein sequence ID" value="AAM82348.1"/>
    <property type="molecule type" value="Genomic_DNA"/>
</dbReference>
<dbReference type="GO" id="GO:0009507">
    <property type="term" value="C:chloroplast"/>
    <property type="evidence" value="ECO:0007669"/>
    <property type="project" value="UniProtKB-SubCell"/>
</dbReference>
<dbReference type="GO" id="GO:0003723">
    <property type="term" value="F:RNA binding"/>
    <property type="evidence" value="ECO:0007669"/>
    <property type="project" value="UniProtKB-KW"/>
</dbReference>
<dbReference type="GO" id="GO:0006397">
    <property type="term" value="P:mRNA processing"/>
    <property type="evidence" value="ECO:0007669"/>
    <property type="project" value="UniProtKB-KW"/>
</dbReference>
<dbReference type="GO" id="GO:0008380">
    <property type="term" value="P:RNA splicing"/>
    <property type="evidence" value="ECO:0007669"/>
    <property type="project" value="UniProtKB-UniRule"/>
</dbReference>
<dbReference type="GO" id="GO:0008033">
    <property type="term" value="P:tRNA processing"/>
    <property type="evidence" value="ECO:0007669"/>
    <property type="project" value="UniProtKB-KW"/>
</dbReference>
<dbReference type="HAMAP" id="MF_01390">
    <property type="entry name" value="MatK"/>
    <property type="match status" value="1"/>
</dbReference>
<dbReference type="InterPro" id="IPR024937">
    <property type="entry name" value="Domain_X"/>
</dbReference>
<dbReference type="InterPro" id="IPR002866">
    <property type="entry name" value="Maturase_MatK"/>
</dbReference>
<dbReference type="InterPro" id="IPR024942">
    <property type="entry name" value="Maturase_MatK_N"/>
</dbReference>
<dbReference type="PANTHER" id="PTHR34811">
    <property type="entry name" value="MATURASE K"/>
    <property type="match status" value="1"/>
</dbReference>
<dbReference type="PANTHER" id="PTHR34811:SF1">
    <property type="entry name" value="MATURASE K"/>
    <property type="match status" value="1"/>
</dbReference>
<dbReference type="Pfam" id="PF01348">
    <property type="entry name" value="Intron_maturas2"/>
    <property type="match status" value="1"/>
</dbReference>
<dbReference type="Pfam" id="PF01824">
    <property type="entry name" value="MatK_N"/>
    <property type="match status" value="1"/>
</dbReference>
<geneLocation type="chloroplast"/>
<proteinExistence type="inferred from homology"/>
<sequence>MDEFHRYGKEDSSWQQCFLYPLFFQEDLYAISHDHYLDGSSSSEPMEHFSFNDQLSFLTVKRLIGRIREQNHSIGLFVNCDPNPLVDRNKSSYFESVLEGLTLVLEVPFSTRSKYSVQGIKEWKSFRSIHSIFPFLEEKFPHSNYILDTRIPYSIHPEFLVRTFRRWIQDAPSLHPLRSVLYEYRNSPENLQRSIIVAPRVNTRFFLFLWNHYVYECESILVPLLKRSFQSRSSSHGSFPERTLFDRKIKHIIRISHRNSLKSIWSLKDPKIHYVRYGERFIIAIKGTHLLVKKCRYYLPIFRQCYFHLWSEPYRVCSHQLSKNCSSFPGYSLRVRMKPLLVRTKMLGELFITDLITDEFYPIVPIVSIIGLLAREKFCDISGRPISKLAWTSLTDDDILDRFDRIWRNFFHYYSGSFGRDGLYRIKYILSLSCAKTLACKHKSTIRVVRKELGPELFKKSFSKEREFDSPAFSSKAVARSQRERIWHSDIPQINPLANSWQKIQDLKIKNLFDQ</sequence>
<comment type="function">
    <text evidence="1">Usually encoded in the trnK tRNA gene intron. Probably assists in splicing its own and other chloroplast group II introns.</text>
</comment>
<comment type="subcellular location">
    <subcellularLocation>
        <location>Plastid</location>
        <location>Chloroplast</location>
    </subcellularLocation>
</comment>
<comment type="similarity">
    <text evidence="1">Belongs to the intron maturase 2 family. MatK subfamily.</text>
</comment>
<keyword id="KW-0150">Chloroplast</keyword>
<keyword id="KW-0507">mRNA processing</keyword>
<keyword id="KW-0934">Plastid</keyword>
<keyword id="KW-0694">RNA-binding</keyword>
<keyword id="KW-0819">tRNA processing</keyword>
<gene>
    <name evidence="1" type="primary">matK</name>
</gene>
<name>MATK_CEDDE</name>
<organism>
    <name type="scientific">Cedrus deodara</name>
    <name type="common">Deodar cedar</name>
    <name type="synonym">Pinus deodara</name>
    <dbReference type="NCBI Taxonomy" id="3322"/>
    <lineage>
        <taxon>Eukaryota</taxon>
        <taxon>Viridiplantae</taxon>
        <taxon>Streptophyta</taxon>
        <taxon>Embryophyta</taxon>
        <taxon>Tracheophyta</taxon>
        <taxon>Spermatophyta</taxon>
        <taxon>Pinopsida</taxon>
        <taxon>Pinidae</taxon>
        <taxon>Conifers I</taxon>
        <taxon>Pinales</taxon>
        <taxon>Pinaceae</taxon>
        <taxon>Cedrus</taxon>
    </lineage>
</organism>
<protein>
    <recommendedName>
        <fullName evidence="1">Maturase K</fullName>
    </recommendedName>
    <alternativeName>
        <fullName evidence="1">Intron maturase</fullName>
    </alternativeName>
</protein>